<dbReference type="EC" id="2.7.7.6" evidence="1"/>
<dbReference type="EMBL" id="CP000352">
    <property type="protein sequence ID" value="ABF10163.1"/>
    <property type="molecule type" value="Genomic_DNA"/>
</dbReference>
<dbReference type="RefSeq" id="WP_008642968.1">
    <property type="nucleotide sequence ID" value="NC_007973.1"/>
</dbReference>
<dbReference type="SMR" id="Q1LI63"/>
<dbReference type="STRING" id="266264.Rmet_3291"/>
<dbReference type="KEGG" id="rme:Rmet_3291"/>
<dbReference type="eggNOG" id="COG0202">
    <property type="taxonomic scope" value="Bacteria"/>
</dbReference>
<dbReference type="HOGENOM" id="CLU_053084_0_0_4"/>
<dbReference type="Proteomes" id="UP000002429">
    <property type="component" value="Chromosome"/>
</dbReference>
<dbReference type="GO" id="GO:0005737">
    <property type="term" value="C:cytoplasm"/>
    <property type="evidence" value="ECO:0007669"/>
    <property type="project" value="UniProtKB-ARBA"/>
</dbReference>
<dbReference type="GO" id="GO:0000428">
    <property type="term" value="C:DNA-directed RNA polymerase complex"/>
    <property type="evidence" value="ECO:0007669"/>
    <property type="project" value="UniProtKB-KW"/>
</dbReference>
<dbReference type="GO" id="GO:0003677">
    <property type="term" value="F:DNA binding"/>
    <property type="evidence" value="ECO:0007669"/>
    <property type="project" value="UniProtKB-UniRule"/>
</dbReference>
<dbReference type="GO" id="GO:0003899">
    <property type="term" value="F:DNA-directed RNA polymerase activity"/>
    <property type="evidence" value="ECO:0007669"/>
    <property type="project" value="UniProtKB-UniRule"/>
</dbReference>
<dbReference type="GO" id="GO:0046983">
    <property type="term" value="F:protein dimerization activity"/>
    <property type="evidence" value="ECO:0007669"/>
    <property type="project" value="InterPro"/>
</dbReference>
<dbReference type="GO" id="GO:0006351">
    <property type="term" value="P:DNA-templated transcription"/>
    <property type="evidence" value="ECO:0007669"/>
    <property type="project" value="UniProtKB-UniRule"/>
</dbReference>
<dbReference type="CDD" id="cd06928">
    <property type="entry name" value="RNAP_alpha_NTD"/>
    <property type="match status" value="1"/>
</dbReference>
<dbReference type="FunFam" id="1.10.150.20:FF:000001">
    <property type="entry name" value="DNA-directed RNA polymerase subunit alpha"/>
    <property type="match status" value="1"/>
</dbReference>
<dbReference type="FunFam" id="2.170.120.12:FF:000001">
    <property type="entry name" value="DNA-directed RNA polymerase subunit alpha"/>
    <property type="match status" value="1"/>
</dbReference>
<dbReference type="Gene3D" id="1.10.150.20">
    <property type="entry name" value="5' to 3' exonuclease, C-terminal subdomain"/>
    <property type="match status" value="1"/>
</dbReference>
<dbReference type="Gene3D" id="2.170.120.12">
    <property type="entry name" value="DNA-directed RNA polymerase, insert domain"/>
    <property type="match status" value="1"/>
</dbReference>
<dbReference type="Gene3D" id="3.30.1360.10">
    <property type="entry name" value="RNA polymerase, RBP11-like subunit"/>
    <property type="match status" value="1"/>
</dbReference>
<dbReference type="HAMAP" id="MF_00059">
    <property type="entry name" value="RNApol_bact_RpoA"/>
    <property type="match status" value="1"/>
</dbReference>
<dbReference type="InterPro" id="IPR011262">
    <property type="entry name" value="DNA-dir_RNA_pol_insert"/>
</dbReference>
<dbReference type="InterPro" id="IPR011263">
    <property type="entry name" value="DNA-dir_RNA_pol_RpoA/D/Rpb3"/>
</dbReference>
<dbReference type="InterPro" id="IPR011773">
    <property type="entry name" value="DNA-dir_RpoA"/>
</dbReference>
<dbReference type="InterPro" id="IPR036603">
    <property type="entry name" value="RBP11-like"/>
</dbReference>
<dbReference type="InterPro" id="IPR011260">
    <property type="entry name" value="RNAP_asu_C"/>
</dbReference>
<dbReference type="InterPro" id="IPR036643">
    <property type="entry name" value="RNApol_insert_sf"/>
</dbReference>
<dbReference type="NCBIfam" id="NF003513">
    <property type="entry name" value="PRK05182.1-2"/>
    <property type="match status" value="1"/>
</dbReference>
<dbReference type="NCBIfam" id="NF003519">
    <property type="entry name" value="PRK05182.2-5"/>
    <property type="match status" value="1"/>
</dbReference>
<dbReference type="NCBIfam" id="TIGR02027">
    <property type="entry name" value="rpoA"/>
    <property type="match status" value="1"/>
</dbReference>
<dbReference type="Pfam" id="PF01000">
    <property type="entry name" value="RNA_pol_A_bac"/>
    <property type="match status" value="1"/>
</dbReference>
<dbReference type="Pfam" id="PF03118">
    <property type="entry name" value="RNA_pol_A_CTD"/>
    <property type="match status" value="1"/>
</dbReference>
<dbReference type="Pfam" id="PF01193">
    <property type="entry name" value="RNA_pol_L"/>
    <property type="match status" value="1"/>
</dbReference>
<dbReference type="SMART" id="SM00662">
    <property type="entry name" value="RPOLD"/>
    <property type="match status" value="1"/>
</dbReference>
<dbReference type="SUPFAM" id="SSF47789">
    <property type="entry name" value="C-terminal domain of RNA polymerase alpha subunit"/>
    <property type="match status" value="1"/>
</dbReference>
<dbReference type="SUPFAM" id="SSF56553">
    <property type="entry name" value="Insert subdomain of RNA polymerase alpha subunit"/>
    <property type="match status" value="1"/>
</dbReference>
<dbReference type="SUPFAM" id="SSF55257">
    <property type="entry name" value="RBP11-like subunits of RNA polymerase"/>
    <property type="match status" value="1"/>
</dbReference>
<proteinExistence type="inferred from homology"/>
<comment type="function">
    <text evidence="1">DNA-dependent RNA polymerase catalyzes the transcription of DNA into RNA using the four ribonucleoside triphosphates as substrates.</text>
</comment>
<comment type="catalytic activity">
    <reaction evidence="1">
        <text>RNA(n) + a ribonucleoside 5'-triphosphate = RNA(n+1) + diphosphate</text>
        <dbReference type="Rhea" id="RHEA:21248"/>
        <dbReference type="Rhea" id="RHEA-COMP:14527"/>
        <dbReference type="Rhea" id="RHEA-COMP:17342"/>
        <dbReference type="ChEBI" id="CHEBI:33019"/>
        <dbReference type="ChEBI" id="CHEBI:61557"/>
        <dbReference type="ChEBI" id="CHEBI:140395"/>
        <dbReference type="EC" id="2.7.7.6"/>
    </reaction>
</comment>
<comment type="subunit">
    <text evidence="1">Homodimer. The RNAP catalytic core consists of 2 alpha, 1 beta, 1 beta' and 1 omega subunit. When a sigma factor is associated with the core the holoenzyme is formed, which can initiate transcription.</text>
</comment>
<comment type="domain">
    <text evidence="1">The N-terminal domain is essential for RNAP assembly and basal transcription, whereas the C-terminal domain is involved in interaction with transcriptional regulators and with upstream promoter elements.</text>
</comment>
<comment type="similarity">
    <text evidence="1">Belongs to the RNA polymerase alpha chain family.</text>
</comment>
<keyword id="KW-0240">DNA-directed RNA polymerase</keyword>
<keyword id="KW-0548">Nucleotidyltransferase</keyword>
<keyword id="KW-1185">Reference proteome</keyword>
<keyword id="KW-0804">Transcription</keyword>
<keyword id="KW-0808">Transferase</keyword>
<reference key="1">
    <citation type="journal article" date="2010" name="PLoS ONE">
        <title>The complete genome sequence of Cupriavidus metallidurans strain CH34, a master survivalist in harsh and anthropogenic environments.</title>
        <authorList>
            <person name="Janssen P.J."/>
            <person name="Van Houdt R."/>
            <person name="Moors H."/>
            <person name="Monsieurs P."/>
            <person name="Morin N."/>
            <person name="Michaux A."/>
            <person name="Benotmane M.A."/>
            <person name="Leys N."/>
            <person name="Vallaeys T."/>
            <person name="Lapidus A."/>
            <person name="Monchy S."/>
            <person name="Medigue C."/>
            <person name="Taghavi S."/>
            <person name="McCorkle S."/>
            <person name="Dunn J."/>
            <person name="van der Lelie D."/>
            <person name="Mergeay M."/>
        </authorList>
    </citation>
    <scope>NUCLEOTIDE SEQUENCE [LARGE SCALE GENOMIC DNA]</scope>
    <source>
        <strain>ATCC 43123 / DSM 2839 / NBRC 102507 / CH34</strain>
    </source>
</reference>
<sequence length="326" mass="35601">MQTALLKPKIIAVEPLGDHHAKVVMEPFERGYGHTLGNALRRVLLSSMVGYAPTEVTIAGVVHEYSTIDGVQEDVVNLLLNLKGVVFKLHNRDEVTVSLRKDGEGVVTAADIELPHDVEIINPGHVIAHLSAGGKLDMQIKVEQGRGYVPGNVRKFGDEASKVIGRIVLDASFSPVRRVSYAVESARVEQRTDLDKLVMNIETDGVISPEEAIRQSARILVDQLSVFAALEGTESAAEAASSRAPQIDPILLRPVDDLELTVRSANCLKAENIYYIGDLIQRTENELLKTPNLGRKSLNEIKEVLASRGLTLGMKLENWPPAGLEK</sequence>
<organism>
    <name type="scientific">Cupriavidus metallidurans (strain ATCC 43123 / DSM 2839 / NBRC 102507 / CH34)</name>
    <name type="common">Ralstonia metallidurans</name>
    <dbReference type="NCBI Taxonomy" id="266264"/>
    <lineage>
        <taxon>Bacteria</taxon>
        <taxon>Pseudomonadati</taxon>
        <taxon>Pseudomonadota</taxon>
        <taxon>Betaproteobacteria</taxon>
        <taxon>Burkholderiales</taxon>
        <taxon>Burkholderiaceae</taxon>
        <taxon>Cupriavidus</taxon>
    </lineage>
</organism>
<name>RPOA_CUPMC</name>
<evidence type="ECO:0000255" key="1">
    <source>
        <dbReference type="HAMAP-Rule" id="MF_00059"/>
    </source>
</evidence>
<gene>
    <name evidence="1" type="primary">rpoA</name>
    <name type="ordered locus">Rmet_3291</name>
</gene>
<accession>Q1LI63</accession>
<protein>
    <recommendedName>
        <fullName evidence="1">DNA-directed RNA polymerase subunit alpha</fullName>
        <shortName evidence="1">RNAP subunit alpha</shortName>
        <ecNumber evidence="1">2.7.7.6</ecNumber>
    </recommendedName>
    <alternativeName>
        <fullName evidence="1">RNA polymerase subunit alpha</fullName>
    </alternativeName>
    <alternativeName>
        <fullName evidence="1">Transcriptase subunit alpha</fullName>
    </alternativeName>
</protein>
<feature type="chain" id="PRO_0000264529" description="DNA-directed RNA polymerase subunit alpha">
    <location>
        <begin position="1"/>
        <end position="326"/>
    </location>
</feature>
<feature type="region of interest" description="Alpha N-terminal domain (alpha-NTD)" evidence="1">
    <location>
        <begin position="1"/>
        <end position="231"/>
    </location>
</feature>
<feature type="region of interest" description="Alpha C-terminal domain (alpha-CTD)" evidence="1">
    <location>
        <begin position="247"/>
        <end position="326"/>
    </location>
</feature>